<evidence type="ECO:0000255" key="1">
    <source>
        <dbReference type="HAMAP-Rule" id="MF_00102"/>
    </source>
</evidence>
<evidence type="ECO:0000305" key="2"/>
<feature type="chain" id="PRO_0000141410" description="4-hydroxy-tetrahydrodipicolinate reductase">
    <location>
        <begin position="1"/>
        <end position="264"/>
    </location>
</feature>
<feature type="active site" description="Proton donor/acceptor" evidence="1">
    <location>
        <position position="153"/>
    </location>
</feature>
<feature type="active site" description="Proton donor" evidence="1">
    <location>
        <position position="157"/>
    </location>
</feature>
<feature type="binding site" evidence="1">
    <location>
        <begin position="8"/>
        <end position="13"/>
    </location>
    <ligand>
        <name>NAD(+)</name>
        <dbReference type="ChEBI" id="CHEBI:57540"/>
    </ligand>
</feature>
<feature type="binding site" evidence="1">
    <location>
        <position position="36"/>
    </location>
    <ligand>
        <name>NADP(+)</name>
        <dbReference type="ChEBI" id="CHEBI:58349"/>
    </ligand>
</feature>
<feature type="binding site" evidence="1">
    <location>
        <begin position="97"/>
        <end position="99"/>
    </location>
    <ligand>
        <name>NAD(+)</name>
        <dbReference type="ChEBI" id="CHEBI:57540"/>
    </ligand>
</feature>
<feature type="binding site" evidence="1">
    <location>
        <begin position="123"/>
        <end position="126"/>
    </location>
    <ligand>
        <name>NAD(+)</name>
        <dbReference type="ChEBI" id="CHEBI:57540"/>
    </ligand>
</feature>
<feature type="binding site" evidence="1">
    <location>
        <position position="154"/>
    </location>
    <ligand>
        <name>(S)-2,3,4,5-tetrahydrodipicolinate</name>
        <dbReference type="ChEBI" id="CHEBI:16845"/>
    </ligand>
</feature>
<feature type="binding site" evidence="1">
    <location>
        <begin position="163"/>
        <end position="164"/>
    </location>
    <ligand>
        <name>(S)-2,3,4,5-tetrahydrodipicolinate</name>
        <dbReference type="ChEBI" id="CHEBI:16845"/>
    </ligand>
</feature>
<accession>Q9KC93</accession>
<keyword id="KW-0028">Amino-acid biosynthesis</keyword>
<keyword id="KW-0963">Cytoplasm</keyword>
<keyword id="KW-0220">Diaminopimelate biosynthesis</keyword>
<keyword id="KW-0457">Lysine biosynthesis</keyword>
<keyword id="KW-0520">NAD</keyword>
<keyword id="KW-0521">NADP</keyword>
<keyword id="KW-0560">Oxidoreductase</keyword>
<keyword id="KW-1185">Reference proteome</keyword>
<proteinExistence type="inferred from homology"/>
<comment type="function">
    <text evidence="1">Catalyzes the conversion of 4-hydroxy-tetrahydrodipicolinate (HTPA) to tetrahydrodipicolinate.</text>
</comment>
<comment type="catalytic activity">
    <reaction evidence="1">
        <text>(S)-2,3,4,5-tetrahydrodipicolinate + NAD(+) + H2O = (2S,4S)-4-hydroxy-2,3,4,5-tetrahydrodipicolinate + NADH + H(+)</text>
        <dbReference type="Rhea" id="RHEA:35323"/>
        <dbReference type="ChEBI" id="CHEBI:15377"/>
        <dbReference type="ChEBI" id="CHEBI:15378"/>
        <dbReference type="ChEBI" id="CHEBI:16845"/>
        <dbReference type="ChEBI" id="CHEBI:57540"/>
        <dbReference type="ChEBI" id="CHEBI:57945"/>
        <dbReference type="ChEBI" id="CHEBI:67139"/>
        <dbReference type="EC" id="1.17.1.8"/>
    </reaction>
</comment>
<comment type="catalytic activity">
    <reaction evidence="1">
        <text>(S)-2,3,4,5-tetrahydrodipicolinate + NADP(+) + H2O = (2S,4S)-4-hydroxy-2,3,4,5-tetrahydrodipicolinate + NADPH + H(+)</text>
        <dbReference type="Rhea" id="RHEA:35331"/>
        <dbReference type="ChEBI" id="CHEBI:15377"/>
        <dbReference type="ChEBI" id="CHEBI:15378"/>
        <dbReference type="ChEBI" id="CHEBI:16845"/>
        <dbReference type="ChEBI" id="CHEBI:57783"/>
        <dbReference type="ChEBI" id="CHEBI:58349"/>
        <dbReference type="ChEBI" id="CHEBI:67139"/>
        <dbReference type="EC" id="1.17.1.8"/>
    </reaction>
</comment>
<comment type="pathway">
    <text evidence="1">Amino-acid biosynthesis; L-lysine biosynthesis via DAP pathway; (S)-tetrahydrodipicolinate from L-aspartate: step 4/4.</text>
</comment>
<comment type="subcellular location">
    <subcellularLocation>
        <location evidence="1">Cytoplasm</location>
    </subcellularLocation>
</comment>
<comment type="similarity">
    <text evidence="1">Belongs to the DapB family.</text>
</comment>
<comment type="caution">
    <text evidence="2">Was originally thought to be a dihydrodipicolinate reductase (DHDPR), catalyzing the conversion of dihydrodipicolinate to tetrahydrodipicolinate. However, it was shown in E.coli that the substrate of the enzymatic reaction is not dihydrodipicolinate (DHDP) but in fact (2S,4S)-4-hydroxy-2,3,4,5-tetrahydrodipicolinic acid (HTPA), the product released by the DapA-catalyzed reaction.</text>
</comment>
<name>DAPB_HALH5</name>
<sequence length="264" mass="28754">MIKVAVAGPRGKMGREAVKMIHEADTLELVAVVDSKHDGMLVRQLDGLPPSDAPVYNELERCLTSQTIDVLVDLTTPAHGKRHMEIALDHGVRPVVGTTGFTDEDITNLRKKAEEKGIGAIIAPNFAIGAILMMKFAQTAAKYLPDVEIIEMHHDRKLDAPSGTALKTAQLISEVRKAKQQGHPDETEELKGARGADFEGMSIHSVRLPGLVAHQEVLFGGVGQTLKIRHDSMNRESFMPGVKLSIETVMGIDTLVYGLENIIE</sequence>
<organism>
    <name type="scientific">Halalkalibacterium halodurans (strain ATCC BAA-125 / DSM 18197 / FERM 7344 / JCM 9153 / C-125)</name>
    <name type="common">Bacillus halodurans</name>
    <dbReference type="NCBI Taxonomy" id="272558"/>
    <lineage>
        <taxon>Bacteria</taxon>
        <taxon>Bacillati</taxon>
        <taxon>Bacillota</taxon>
        <taxon>Bacilli</taxon>
        <taxon>Bacillales</taxon>
        <taxon>Bacillaceae</taxon>
        <taxon>Halalkalibacterium (ex Joshi et al. 2022)</taxon>
    </lineage>
</organism>
<protein>
    <recommendedName>
        <fullName evidence="1">4-hydroxy-tetrahydrodipicolinate reductase</fullName>
        <shortName evidence="1">HTPA reductase</shortName>
        <ecNumber evidence="1">1.17.1.8</ecNumber>
    </recommendedName>
</protein>
<gene>
    <name evidence="1" type="primary">dapB</name>
    <name type="ordered locus">BH1680</name>
</gene>
<reference key="1">
    <citation type="journal article" date="2000" name="Nucleic Acids Res.">
        <title>Complete genome sequence of the alkaliphilic bacterium Bacillus halodurans and genomic sequence comparison with Bacillus subtilis.</title>
        <authorList>
            <person name="Takami H."/>
            <person name="Nakasone K."/>
            <person name="Takaki Y."/>
            <person name="Maeno G."/>
            <person name="Sasaki R."/>
            <person name="Masui N."/>
            <person name="Fuji F."/>
            <person name="Hirama C."/>
            <person name="Nakamura Y."/>
            <person name="Ogasawara N."/>
            <person name="Kuhara S."/>
            <person name="Horikoshi K."/>
        </authorList>
    </citation>
    <scope>NUCLEOTIDE SEQUENCE [LARGE SCALE GENOMIC DNA]</scope>
    <source>
        <strain>ATCC BAA-125 / DSM 18197 / FERM 7344 / JCM 9153 / C-125</strain>
    </source>
</reference>
<dbReference type="EC" id="1.17.1.8" evidence="1"/>
<dbReference type="EMBL" id="BA000004">
    <property type="protein sequence ID" value="BAB05399.1"/>
    <property type="molecule type" value="Genomic_DNA"/>
</dbReference>
<dbReference type="PIR" id="H83859">
    <property type="entry name" value="H83859"/>
</dbReference>
<dbReference type="RefSeq" id="WP_010897842.1">
    <property type="nucleotide sequence ID" value="NC_002570.2"/>
</dbReference>
<dbReference type="SMR" id="Q9KC93"/>
<dbReference type="STRING" id="272558.gene:10727578"/>
<dbReference type="GeneID" id="87597298"/>
<dbReference type="KEGG" id="bha:BH1680"/>
<dbReference type="eggNOG" id="COG0289">
    <property type="taxonomic scope" value="Bacteria"/>
</dbReference>
<dbReference type="HOGENOM" id="CLU_047479_0_1_9"/>
<dbReference type="OrthoDB" id="9790352at2"/>
<dbReference type="UniPathway" id="UPA00034">
    <property type="reaction ID" value="UER00018"/>
</dbReference>
<dbReference type="Proteomes" id="UP000001258">
    <property type="component" value="Chromosome"/>
</dbReference>
<dbReference type="GO" id="GO:0005829">
    <property type="term" value="C:cytosol"/>
    <property type="evidence" value="ECO:0007669"/>
    <property type="project" value="TreeGrafter"/>
</dbReference>
<dbReference type="GO" id="GO:0008839">
    <property type="term" value="F:4-hydroxy-tetrahydrodipicolinate reductase"/>
    <property type="evidence" value="ECO:0007669"/>
    <property type="project" value="UniProtKB-EC"/>
</dbReference>
<dbReference type="GO" id="GO:0051287">
    <property type="term" value="F:NAD binding"/>
    <property type="evidence" value="ECO:0007669"/>
    <property type="project" value="UniProtKB-UniRule"/>
</dbReference>
<dbReference type="GO" id="GO:0050661">
    <property type="term" value="F:NADP binding"/>
    <property type="evidence" value="ECO:0007669"/>
    <property type="project" value="UniProtKB-UniRule"/>
</dbReference>
<dbReference type="GO" id="GO:0016726">
    <property type="term" value="F:oxidoreductase activity, acting on CH or CH2 groups, NAD or NADP as acceptor"/>
    <property type="evidence" value="ECO:0007669"/>
    <property type="project" value="UniProtKB-UniRule"/>
</dbReference>
<dbReference type="GO" id="GO:0019877">
    <property type="term" value="P:diaminopimelate biosynthetic process"/>
    <property type="evidence" value="ECO:0007669"/>
    <property type="project" value="UniProtKB-UniRule"/>
</dbReference>
<dbReference type="GO" id="GO:0009089">
    <property type="term" value="P:lysine biosynthetic process via diaminopimelate"/>
    <property type="evidence" value="ECO:0007669"/>
    <property type="project" value="UniProtKB-UniRule"/>
</dbReference>
<dbReference type="CDD" id="cd02274">
    <property type="entry name" value="DHDPR_N"/>
    <property type="match status" value="1"/>
</dbReference>
<dbReference type="FunFam" id="3.30.360.10:FF:000009">
    <property type="entry name" value="4-hydroxy-tetrahydrodipicolinate reductase"/>
    <property type="match status" value="1"/>
</dbReference>
<dbReference type="FunFam" id="3.40.50.720:FF:000180">
    <property type="entry name" value="4-hydroxy-tetrahydrodipicolinate reductase"/>
    <property type="match status" value="1"/>
</dbReference>
<dbReference type="Gene3D" id="3.30.360.10">
    <property type="entry name" value="Dihydrodipicolinate Reductase, domain 2"/>
    <property type="match status" value="1"/>
</dbReference>
<dbReference type="Gene3D" id="3.40.50.720">
    <property type="entry name" value="NAD(P)-binding Rossmann-like Domain"/>
    <property type="match status" value="1"/>
</dbReference>
<dbReference type="HAMAP" id="MF_00102">
    <property type="entry name" value="DapB"/>
    <property type="match status" value="1"/>
</dbReference>
<dbReference type="InterPro" id="IPR022663">
    <property type="entry name" value="DapB_C"/>
</dbReference>
<dbReference type="InterPro" id="IPR000846">
    <property type="entry name" value="DapB_N"/>
</dbReference>
<dbReference type="InterPro" id="IPR022664">
    <property type="entry name" value="DapB_N_CS"/>
</dbReference>
<dbReference type="InterPro" id="IPR023940">
    <property type="entry name" value="DHDPR_bac"/>
</dbReference>
<dbReference type="InterPro" id="IPR036291">
    <property type="entry name" value="NAD(P)-bd_dom_sf"/>
</dbReference>
<dbReference type="NCBIfam" id="TIGR00036">
    <property type="entry name" value="dapB"/>
    <property type="match status" value="1"/>
</dbReference>
<dbReference type="PANTHER" id="PTHR20836:SF0">
    <property type="entry name" value="4-HYDROXY-TETRAHYDRODIPICOLINATE REDUCTASE 1, CHLOROPLASTIC-RELATED"/>
    <property type="match status" value="1"/>
</dbReference>
<dbReference type="PANTHER" id="PTHR20836">
    <property type="entry name" value="DIHYDRODIPICOLINATE REDUCTASE"/>
    <property type="match status" value="1"/>
</dbReference>
<dbReference type="Pfam" id="PF05173">
    <property type="entry name" value="DapB_C"/>
    <property type="match status" value="1"/>
</dbReference>
<dbReference type="Pfam" id="PF01113">
    <property type="entry name" value="DapB_N"/>
    <property type="match status" value="1"/>
</dbReference>
<dbReference type="PIRSF" id="PIRSF000161">
    <property type="entry name" value="DHPR"/>
    <property type="match status" value="1"/>
</dbReference>
<dbReference type="SUPFAM" id="SSF55347">
    <property type="entry name" value="Glyceraldehyde-3-phosphate dehydrogenase-like, C-terminal domain"/>
    <property type="match status" value="1"/>
</dbReference>
<dbReference type="SUPFAM" id="SSF51735">
    <property type="entry name" value="NAD(P)-binding Rossmann-fold domains"/>
    <property type="match status" value="1"/>
</dbReference>
<dbReference type="PROSITE" id="PS01298">
    <property type="entry name" value="DAPB"/>
    <property type="match status" value="1"/>
</dbReference>